<proteinExistence type="inferred from homology"/>
<protein>
    <recommendedName>
        <fullName evidence="1">Large ribosomal subunit protein uL16</fullName>
    </recommendedName>
    <alternativeName>
        <fullName evidence="2">50S ribosomal protein L16</fullName>
    </alternativeName>
</protein>
<evidence type="ECO:0000255" key="1">
    <source>
        <dbReference type="HAMAP-Rule" id="MF_01342"/>
    </source>
</evidence>
<evidence type="ECO:0000305" key="2"/>
<reference key="1">
    <citation type="journal article" date="2000" name="Nature">
        <title>The genome sequence of the plant pathogen Xylella fastidiosa.</title>
        <authorList>
            <person name="Simpson A.J.G."/>
            <person name="Reinach F.C."/>
            <person name="Arruda P."/>
            <person name="Abreu F.A."/>
            <person name="Acencio M."/>
            <person name="Alvarenga R."/>
            <person name="Alves L.M.C."/>
            <person name="Araya J.E."/>
            <person name="Baia G.S."/>
            <person name="Baptista C.S."/>
            <person name="Barros M.H."/>
            <person name="Bonaccorsi E.D."/>
            <person name="Bordin S."/>
            <person name="Bove J.M."/>
            <person name="Briones M.R.S."/>
            <person name="Bueno M.R.P."/>
            <person name="Camargo A.A."/>
            <person name="Camargo L.E.A."/>
            <person name="Carraro D.M."/>
            <person name="Carrer H."/>
            <person name="Colauto N.B."/>
            <person name="Colombo C."/>
            <person name="Costa F.F."/>
            <person name="Costa M.C.R."/>
            <person name="Costa-Neto C.M."/>
            <person name="Coutinho L.L."/>
            <person name="Cristofani M."/>
            <person name="Dias-Neto E."/>
            <person name="Docena C."/>
            <person name="El-Dorry H."/>
            <person name="Facincani A.P."/>
            <person name="Ferreira A.J.S."/>
            <person name="Ferreira V.C.A."/>
            <person name="Ferro J.A."/>
            <person name="Fraga J.S."/>
            <person name="Franca S.C."/>
            <person name="Franco M.C."/>
            <person name="Frohme M."/>
            <person name="Furlan L.R."/>
            <person name="Garnier M."/>
            <person name="Goldman G.H."/>
            <person name="Goldman M.H.S."/>
            <person name="Gomes S.L."/>
            <person name="Gruber A."/>
            <person name="Ho P.L."/>
            <person name="Hoheisel J.D."/>
            <person name="Junqueira M.L."/>
            <person name="Kemper E.L."/>
            <person name="Kitajima J.P."/>
            <person name="Krieger J.E."/>
            <person name="Kuramae E.E."/>
            <person name="Laigret F."/>
            <person name="Lambais M.R."/>
            <person name="Leite L.C.C."/>
            <person name="Lemos E.G.M."/>
            <person name="Lemos M.V.F."/>
            <person name="Lopes S.A."/>
            <person name="Lopes C.R."/>
            <person name="Machado J.A."/>
            <person name="Machado M.A."/>
            <person name="Madeira A.M.B.N."/>
            <person name="Madeira H.M.F."/>
            <person name="Marino C.L."/>
            <person name="Marques M.V."/>
            <person name="Martins E.A.L."/>
            <person name="Martins E.M.F."/>
            <person name="Matsukuma A.Y."/>
            <person name="Menck C.F.M."/>
            <person name="Miracca E.C."/>
            <person name="Miyaki C.Y."/>
            <person name="Monteiro-Vitorello C.B."/>
            <person name="Moon D.H."/>
            <person name="Nagai M.A."/>
            <person name="Nascimento A.L.T.O."/>
            <person name="Netto L.E.S."/>
            <person name="Nhani A. Jr."/>
            <person name="Nobrega F.G."/>
            <person name="Nunes L.R."/>
            <person name="Oliveira M.A."/>
            <person name="de Oliveira M.C."/>
            <person name="de Oliveira R.C."/>
            <person name="Palmieri D.A."/>
            <person name="Paris A."/>
            <person name="Peixoto B.R."/>
            <person name="Pereira G.A.G."/>
            <person name="Pereira H.A. Jr."/>
            <person name="Pesquero J.B."/>
            <person name="Quaggio R.B."/>
            <person name="Roberto P.G."/>
            <person name="Rodrigues V."/>
            <person name="de Rosa A.J.M."/>
            <person name="de Rosa V.E. Jr."/>
            <person name="de Sa R.G."/>
            <person name="Santelli R.V."/>
            <person name="Sawasaki H.E."/>
            <person name="da Silva A.C.R."/>
            <person name="da Silva A.M."/>
            <person name="da Silva F.R."/>
            <person name="Silva W.A. Jr."/>
            <person name="da Silveira J.F."/>
            <person name="Silvestri M.L.Z."/>
            <person name="Siqueira W.J."/>
            <person name="de Souza A.A."/>
            <person name="de Souza A.P."/>
            <person name="Terenzi M.F."/>
            <person name="Truffi D."/>
            <person name="Tsai S.M."/>
            <person name="Tsuhako M.H."/>
            <person name="Vallada H."/>
            <person name="Van Sluys M.A."/>
            <person name="Verjovski-Almeida S."/>
            <person name="Vettore A.L."/>
            <person name="Zago M.A."/>
            <person name="Zatz M."/>
            <person name="Meidanis J."/>
            <person name="Setubal J.C."/>
        </authorList>
    </citation>
    <scope>NUCLEOTIDE SEQUENCE [LARGE SCALE GENOMIC DNA]</scope>
    <source>
        <strain>9a5c</strain>
    </source>
</reference>
<feature type="chain" id="PRO_0000062258" description="Large ribosomal subunit protein uL16">
    <location>
        <begin position="1"/>
        <end position="137"/>
    </location>
</feature>
<organism>
    <name type="scientific">Xylella fastidiosa (strain 9a5c)</name>
    <dbReference type="NCBI Taxonomy" id="160492"/>
    <lineage>
        <taxon>Bacteria</taxon>
        <taxon>Pseudomonadati</taxon>
        <taxon>Pseudomonadota</taxon>
        <taxon>Gammaproteobacteria</taxon>
        <taxon>Lysobacterales</taxon>
        <taxon>Lysobacteraceae</taxon>
        <taxon>Xylella</taxon>
    </lineage>
</organism>
<keyword id="KW-0687">Ribonucleoprotein</keyword>
<keyword id="KW-0689">Ribosomal protein</keyword>
<keyword id="KW-0694">RNA-binding</keyword>
<keyword id="KW-0699">rRNA-binding</keyword>
<keyword id="KW-0820">tRNA-binding</keyword>
<name>RL16_XYLFA</name>
<gene>
    <name evidence="1" type="primary">rplP</name>
    <name type="ordered locus">XF_1159</name>
</gene>
<dbReference type="EMBL" id="AE003849">
    <property type="protein sequence ID" value="AAF83969.1"/>
    <property type="molecule type" value="Genomic_DNA"/>
</dbReference>
<dbReference type="PIR" id="G82717">
    <property type="entry name" value="G82717"/>
</dbReference>
<dbReference type="RefSeq" id="WP_004086531.1">
    <property type="nucleotide sequence ID" value="NC_002488.3"/>
</dbReference>
<dbReference type="SMR" id="Q9PE69"/>
<dbReference type="STRING" id="160492.XF_1159"/>
<dbReference type="GeneID" id="93904146"/>
<dbReference type="KEGG" id="xfa:XF_1159"/>
<dbReference type="eggNOG" id="COG0197">
    <property type="taxonomic scope" value="Bacteria"/>
</dbReference>
<dbReference type="HOGENOM" id="CLU_078858_2_1_6"/>
<dbReference type="Proteomes" id="UP000000812">
    <property type="component" value="Chromosome"/>
</dbReference>
<dbReference type="GO" id="GO:0022625">
    <property type="term" value="C:cytosolic large ribosomal subunit"/>
    <property type="evidence" value="ECO:0007669"/>
    <property type="project" value="TreeGrafter"/>
</dbReference>
<dbReference type="GO" id="GO:0019843">
    <property type="term" value="F:rRNA binding"/>
    <property type="evidence" value="ECO:0007669"/>
    <property type="project" value="UniProtKB-UniRule"/>
</dbReference>
<dbReference type="GO" id="GO:0003735">
    <property type="term" value="F:structural constituent of ribosome"/>
    <property type="evidence" value="ECO:0007669"/>
    <property type="project" value="InterPro"/>
</dbReference>
<dbReference type="GO" id="GO:0000049">
    <property type="term" value="F:tRNA binding"/>
    <property type="evidence" value="ECO:0007669"/>
    <property type="project" value="UniProtKB-KW"/>
</dbReference>
<dbReference type="GO" id="GO:0006412">
    <property type="term" value="P:translation"/>
    <property type="evidence" value="ECO:0007669"/>
    <property type="project" value="UniProtKB-UniRule"/>
</dbReference>
<dbReference type="CDD" id="cd01433">
    <property type="entry name" value="Ribosomal_L16_L10e"/>
    <property type="match status" value="1"/>
</dbReference>
<dbReference type="FunFam" id="3.90.1170.10:FF:000001">
    <property type="entry name" value="50S ribosomal protein L16"/>
    <property type="match status" value="1"/>
</dbReference>
<dbReference type="Gene3D" id="3.90.1170.10">
    <property type="entry name" value="Ribosomal protein L10e/L16"/>
    <property type="match status" value="1"/>
</dbReference>
<dbReference type="HAMAP" id="MF_01342">
    <property type="entry name" value="Ribosomal_uL16"/>
    <property type="match status" value="1"/>
</dbReference>
<dbReference type="InterPro" id="IPR047873">
    <property type="entry name" value="Ribosomal_uL16"/>
</dbReference>
<dbReference type="InterPro" id="IPR000114">
    <property type="entry name" value="Ribosomal_uL16_bact-type"/>
</dbReference>
<dbReference type="InterPro" id="IPR020798">
    <property type="entry name" value="Ribosomal_uL16_CS"/>
</dbReference>
<dbReference type="InterPro" id="IPR016180">
    <property type="entry name" value="Ribosomal_uL16_dom"/>
</dbReference>
<dbReference type="InterPro" id="IPR036920">
    <property type="entry name" value="Ribosomal_uL16_sf"/>
</dbReference>
<dbReference type="NCBIfam" id="TIGR01164">
    <property type="entry name" value="rplP_bact"/>
    <property type="match status" value="1"/>
</dbReference>
<dbReference type="PANTHER" id="PTHR12220">
    <property type="entry name" value="50S/60S RIBOSOMAL PROTEIN L16"/>
    <property type="match status" value="1"/>
</dbReference>
<dbReference type="PANTHER" id="PTHR12220:SF13">
    <property type="entry name" value="LARGE RIBOSOMAL SUBUNIT PROTEIN UL16M"/>
    <property type="match status" value="1"/>
</dbReference>
<dbReference type="Pfam" id="PF00252">
    <property type="entry name" value="Ribosomal_L16"/>
    <property type="match status" value="1"/>
</dbReference>
<dbReference type="PRINTS" id="PR00060">
    <property type="entry name" value="RIBOSOMALL16"/>
</dbReference>
<dbReference type="SUPFAM" id="SSF54686">
    <property type="entry name" value="Ribosomal protein L16p/L10e"/>
    <property type="match status" value="1"/>
</dbReference>
<dbReference type="PROSITE" id="PS00701">
    <property type="entry name" value="RIBOSOMAL_L16_2"/>
    <property type="match status" value="1"/>
</dbReference>
<comment type="function">
    <text evidence="1">Binds 23S rRNA and is also seen to make contacts with the A and possibly P site tRNAs.</text>
</comment>
<comment type="subunit">
    <text evidence="1">Part of the 50S ribosomal subunit.</text>
</comment>
<comment type="similarity">
    <text evidence="1">Belongs to the universal ribosomal protein uL16 family.</text>
</comment>
<accession>Q9PE69</accession>
<sequence>MLQPKRTKYRKMHKGRNCGLSWNANVVSFGQYGLRATAHGQLTARQIEAARRSISRYVKRGGKLLIRVFPDKPITKKPIEVRMGSGKGNVEYWVAQIQPGRMIYEIEGVSEDVAREAFRLAASKLSVTTAFVVRTVR</sequence>